<name>GLMS_LEPIC</name>
<dbReference type="EC" id="2.6.1.16" evidence="1"/>
<dbReference type="EMBL" id="AE016823">
    <property type="protein sequence ID" value="AAS69067.1"/>
    <property type="molecule type" value="Genomic_DNA"/>
</dbReference>
<dbReference type="RefSeq" id="WP_000334327.1">
    <property type="nucleotide sequence ID" value="NC_005823.1"/>
</dbReference>
<dbReference type="SMR" id="Q72V57"/>
<dbReference type="GeneID" id="61143797"/>
<dbReference type="KEGG" id="lic:LIC_10445"/>
<dbReference type="HOGENOM" id="CLU_012520_5_2_12"/>
<dbReference type="Proteomes" id="UP000007037">
    <property type="component" value="Chromosome I"/>
</dbReference>
<dbReference type="GO" id="GO:0005829">
    <property type="term" value="C:cytosol"/>
    <property type="evidence" value="ECO:0007669"/>
    <property type="project" value="TreeGrafter"/>
</dbReference>
<dbReference type="GO" id="GO:0097367">
    <property type="term" value="F:carbohydrate derivative binding"/>
    <property type="evidence" value="ECO:0007669"/>
    <property type="project" value="InterPro"/>
</dbReference>
<dbReference type="GO" id="GO:0004360">
    <property type="term" value="F:glutamine-fructose-6-phosphate transaminase (isomerizing) activity"/>
    <property type="evidence" value="ECO:0007669"/>
    <property type="project" value="UniProtKB-UniRule"/>
</dbReference>
<dbReference type="GO" id="GO:0005975">
    <property type="term" value="P:carbohydrate metabolic process"/>
    <property type="evidence" value="ECO:0007669"/>
    <property type="project" value="UniProtKB-UniRule"/>
</dbReference>
<dbReference type="GO" id="GO:0006002">
    <property type="term" value="P:fructose 6-phosphate metabolic process"/>
    <property type="evidence" value="ECO:0007669"/>
    <property type="project" value="TreeGrafter"/>
</dbReference>
<dbReference type="GO" id="GO:0006487">
    <property type="term" value="P:protein N-linked glycosylation"/>
    <property type="evidence" value="ECO:0007669"/>
    <property type="project" value="TreeGrafter"/>
</dbReference>
<dbReference type="GO" id="GO:0006047">
    <property type="term" value="P:UDP-N-acetylglucosamine metabolic process"/>
    <property type="evidence" value="ECO:0007669"/>
    <property type="project" value="TreeGrafter"/>
</dbReference>
<dbReference type="CDD" id="cd00714">
    <property type="entry name" value="GFAT"/>
    <property type="match status" value="1"/>
</dbReference>
<dbReference type="CDD" id="cd05008">
    <property type="entry name" value="SIS_GlmS_GlmD_1"/>
    <property type="match status" value="1"/>
</dbReference>
<dbReference type="CDD" id="cd05009">
    <property type="entry name" value="SIS_GlmS_GlmD_2"/>
    <property type="match status" value="1"/>
</dbReference>
<dbReference type="FunFam" id="3.40.50.10490:FF:000001">
    <property type="entry name" value="Glutamine--fructose-6-phosphate aminotransferase [isomerizing]"/>
    <property type="match status" value="1"/>
</dbReference>
<dbReference type="FunFam" id="3.40.50.10490:FF:000052">
    <property type="entry name" value="Glutamine--fructose-6-phosphate aminotransferase [isomerizing]"/>
    <property type="match status" value="1"/>
</dbReference>
<dbReference type="FunFam" id="3.60.20.10:FF:000065">
    <property type="entry name" value="Glutamine--fructose-6-phosphate aminotransferase [isomerizing]"/>
    <property type="match status" value="1"/>
</dbReference>
<dbReference type="Gene3D" id="3.40.50.10490">
    <property type="entry name" value="Glucose-6-phosphate isomerase like protein, domain 1"/>
    <property type="match status" value="2"/>
</dbReference>
<dbReference type="Gene3D" id="3.60.20.10">
    <property type="entry name" value="Glutamine Phosphoribosylpyrophosphate, subunit 1, domain 1"/>
    <property type="match status" value="1"/>
</dbReference>
<dbReference type="HAMAP" id="MF_00164">
    <property type="entry name" value="GlmS"/>
    <property type="match status" value="1"/>
</dbReference>
<dbReference type="InterPro" id="IPR017932">
    <property type="entry name" value="GATase_2_dom"/>
</dbReference>
<dbReference type="InterPro" id="IPR005855">
    <property type="entry name" value="GFAT"/>
</dbReference>
<dbReference type="InterPro" id="IPR047084">
    <property type="entry name" value="GFAT_N"/>
</dbReference>
<dbReference type="InterPro" id="IPR035466">
    <property type="entry name" value="GlmS/AgaS_SIS"/>
</dbReference>
<dbReference type="InterPro" id="IPR035490">
    <property type="entry name" value="GlmS/FrlB_SIS"/>
</dbReference>
<dbReference type="InterPro" id="IPR029055">
    <property type="entry name" value="Ntn_hydrolases_N"/>
</dbReference>
<dbReference type="InterPro" id="IPR001347">
    <property type="entry name" value="SIS_dom"/>
</dbReference>
<dbReference type="InterPro" id="IPR046348">
    <property type="entry name" value="SIS_dom_sf"/>
</dbReference>
<dbReference type="NCBIfam" id="TIGR01135">
    <property type="entry name" value="glmS"/>
    <property type="match status" value="1"/>
</dbReference>
<dbReference type="NCBIfam" id="NF001484">
    <property type="entry name" value="PRK00331.1"/>
    <property type="match status" value="1"/>
</dbReference>
<dbReference type="PANTHER" id="PTHR10937">
    <property type="entry name" value="GLUCOSAMINE--FRUCTOSE-6-PHOSPHATE AMINOTRANSFERASE, ISOMERIZING"/>
    <property type="match status" value="1"/>
</dbReference>
<dbReference type="PANTHER" id="PTHR10937:SF0">
    <property type="entry name" value="GLUTAMINE--FRUCTOSE-6-PHOSPHATE TRANSAMINASE (ISOMERIZING)"/>
    <property type="match status" value="1"/>
</dbReference>
<dbReference type="Pfam" id="PF13522">
    <property type="entry name" value="GATase_6"/>
    <property type="match status" value="1"/>
</dbReference>
<dbReference type="Pfam" id="PF01380">
    <property type="entry name" value="SIS"/>
    <property type="match status" value="2"/>
</dbReference>
<dbReference type="SUPFAM" id="SSF56235">
    <property type="entry name" value="N-terminal nucleophile aminohydrolases (Ntn hydrolases)"/>
    <property type="match status" value="1"/>
</dbReference>
<dbReference type="SUPFAM" id="SSF53697">
    <property type="entry name" value="SIS domain"/>
    <property type="match status" value="1"/>
</dbReference>
<dbReference type="PROSITE" id="PS51278">
    <property type="entry name" value="GATASE_TYPE_2"/>
    <property type="match status" value="1"/>
</dbReference>
<dbReference type="PROSITE" id="PS51464">
    <property type="entry name" value="SIS"/>
    <property type="match status" value="2"/>
</dbReference>
<sequence length="610" mass="67943">MCGIVGYAGKKNAESVLVVGLICLEYRGYDSAGIAVLDQGDILVRKSKGKIKDLEAYLREFPAPGNVGIGHTRWATHGEPNQINAHPHTDTNSTVAVVHNGIIENYLELKSQLKKKGHVFQSLTDTEVLPHLLEESKKNGKSNKDSFLELFGKIHGKWAISSVFETEPDRVYFAQDGAPLLIGKGKGEYFLASDISPLTRNCEEVYYVNSGEWGYFSQNEFKLFDFSGKELNPTFKKQELRWEDLDKGGYPHYMIKEIHEQAGIFRKIIQERILENSEIVFPEIKLSKDVLSRVNRIIIQAAGTSYYAGMIGKHYLENFAKIQTDTEASSEFRYRNPVVEGDTLIMGISQSGETADTLASIHEAKAKFIKVVSLVNNVNSTIARESDSYIRTDAGPEIGVASTKAFTAQVLNLLLFSIYMANLKWLISDEEQKILIEEIKLLPAKIDRILAQASKIEEMSSHFTTAKDFIFLGRTYNHPVAMEGALKLKEISYIHASGYAGGEFKHGPIALITNEVPVVCIAPKSEIYTKMVSNIQEIKARKGIIISIVTEGDQEAKSLSDYCFEIPECSEILSPILNVIPLQLLAYYSAIARGCPPDQPRNLAKSVTVE</sequence>
<protein>
    <recommendedName>
        <fullName evidence="1">Glutamine--fructose-6-phosphate aminotransferase [isomerizing]</fullName>
        <ecNumber evidence="1">2.6.1.16</ecNumber>
    </recommendedName>
    <alternativeName>
        <fullName evidence="1">D-fructose-6-phosphate amidotransferase</fullName>
    </alternativeName>
    <alternativeName>
        <fullName evidence="1">GFAT</fullName>
    </alternativeName>
    <alternativeName>
        <fullName evidence="1">Glucosamine-6-phosphate synthase</fullName>
    </alternativeName>
    <alternativeName>
        <fullName evidence="1">Hexosephosphate aminotransferase</fullName>
    </alternativeName>
    <alternativeName>
        <fullName evidence="1">L-glutamine--D-fructose-6-phosphate amidotransferase</fullName>
    </alternativeName>
</protein>
<evidence type="ECO:0000255" key="1">
    <source>
        <dbReference type="HAMAP-Rule" id="MF_00164"/>
    </source>
</evidence>
<proteinExistence type="inferred from homology"/>
<feature type="initiator methionine" description="Removed" evidence="1">
    <location>
        <position position="1"/>
    </location>
</feature>
<feature type="chain" id="PRO_0000135349" description="Glutamine--fructose-6-phosphate aminotransferase [isomerizing]">
    <location>
        <begin position="2"/>
        <end position="610"/>
    </location>
</feature>
<feature type="domain" description="Glutamine amidotransferase type-2" evidence="1">
    <location>
        <begin position="2"/>
        <end position="219"/>
    </location>
</feature>
<feature type="domain" description="SIS 1" evidence="1">
    <location>
        <begin position="287"/>
        <end position="431"/>
    </location>
</feature>
<feature type="domain" description="SIS 2" evidence="1">
    <location>
        <begin position="459"/>
        <end position="600"/>
    </location>
</feature>
<feature type="active site" description="Nucleophile; for GATase activity" evidence="1">
    <location>
        <position position="2"/>
    </location>
</feature>
<feature type="active site" description="For Fru-6P isomerization activity" evidence="1">
    <location>
        <position position="605"/>
    </location>
</feature>
<keyword id="KW-0032">Aminotransferase</keyword>
<keyword id="KW-0963">Cytoplasm</keyword>
<keyword id="KW-0315">Glutamine amidotransferase</keyword>
<keyword id="KW-0677">Repeat</keyword>
<keyword id="KW-0808">Transferase</keyword>
<accession>Q72V57</accession>
<comment type="function">
    <text evidence="1">Catalyzes the first step in hexosamine metabolism, converting fructose-6P into glucosamine-6P using glutamine as a nitrogen source.</text>
</comment>
<comment type="catalytic activity">
    <reaction evidence="1">
        <text>D-fructose 6-phosphate + L-glutamine = D-glucosamine 6-phosphate + L-glutamate</text>
        <dbReference type="Rhea" id="RHEA:13237"/>
        <dbReference type="ChEBI" id="CHEBI:29985"/>
        <dbReference type="ChEBI" id="CHEBI:58359"/>
        <dbReference type="ChEBI" id="CHEBI:58725"/>
        <dbReference type="ChEBI" id="CHEBI:61527"/>
        <dbReference type="EC" id="2.6.1.16"/>
    </reaction>
</comment>
<comment type="subunit">
    <text evidence="1">Homodimer.</text>
</comment>
<comment type="subcellular location">
    <subcellularLocation>
        <location evidence="1">Cytoplasm</location>
    </subcellularLocation>
</comment>
<reference key="1">
    <citation type="journal article" date="2004" name="J. Bacteriol.">
        <title>Comparative genomics of two Leptospira interrogans serovars reveals novel insights into physiology and pathogenesis.</title>
        <authorList>
            <person name="Nascimento A.L.T.O."/>
            <person name="Ko A.I."/>
            <person name="Martins E.A.L."/>
            <person name="Monteiro-Vitorello C.B."/>
            <person name="Ho P.L."/>
            <person name="Haake D.A."/>
            <person name="Verjovski-Almeida S."/>
            <person name="Hartskeerl R.A."/>
            <person name="Marques M.V."/>
            <person name="Oliveira M.C."/>
            <person name="Menck C.F.M."/>
            <person name="Leite L.C.C."/>
            <person name="Carrer H."/>
            <person name="Coutinho L.L."/>
            <person name="Degrave W.M."/>
            <person name="Dellagostin O.A."/>
            <person name="El-Dorry H."/>
            <person name="Ferro E.S."/>
            <person name="Ferro M.I.T."/>
            <person name="Furlan L.R."/>
            <person name="Gamberini M."/>
            <person name="Giglioti E.A."/>
            <person name="Goes-Neto A."/>
            <person name="Goldman G.H."/>
            <person name="Goldman M.H.S."/>
            <person name="Harakava R."/>
            <person name="Jeronimo S.M.B."/>
            <person name="Junqueira-de-Azevedo I.L.M."/>
            <person name="Kimura E.T."/>
            <person name="Kuramae E.E."/>
            <person name="Lemos E.G.M."/>
            <person name="Lemos M.V.F."/>
            <person name="Marino C.L."/>
            <person name="Nunes L.R."/>
            <person name="de Oliveira R.C."/>
            <person name="Pereira G.G."/>
            <person name="Reis M.S."/>
            <person name="Schriefer A."/>
            <person name="Siqueira W.J."/>
            <person name="Sommer P."/>
            <person name="Tsai S.M."/>
            <person name="Simpson A.J.G."/>
            <person name="Ferro J.A."/>
            <person name="Camargo L.E.A."/>
            <person name="Kitajima J.P."/>
            <person name="Setubal J.C."/>
            <person name="Van Sluys M.A."/>
        </authorList>
    </citation>
    <scope>NUCLEOTIDE SEQUENCE [LARGE SCALE GENOMIC DNA]</scope>
    <source>
        <strain>Fiocruz L1-130</strain>
    </source>
</reference>
<gene>
    <name evidence="1" type="primary">glmS</name>
    <name type="ordered locus">LIC_10445</name>
</gene>
<organism>
    <name type="scientific">Leptospira interrogans serogroup Icterohaemorrhagiae serovar copenhageni (strain Fiocruz L1-130)</name>
    <dbReference type="NCBI Taxonomy" id="267671"/>
    <lineage>
        <taxon>Bacteria</taxon>
        <taxon>Pseudomonadati</taxon>
        <taxon>Spirochaetota</taxon>
        <taxon>Spirochaetia</taxon>
        <taxon>Leptospirales</taxon>
        <taxon>Leptospiraceae</taxon>
        <taxon>Leptospira</taxon>
    </lineage>
</organism>